<name>RS4_STRSV</name>
<gene>
    <name evidence="1" type="primary">rpsD</name>
    <name type="ordered locus">SSA_2350</name>
</gene>
<evidence type="ECO:0000255" key="1">
    <source>
        <dbReference type="HAMAP-Rule" id="MF_01306"/>
    </source>
</evidence>
<evidence type="ECO:0000305" key="2"/>
<sequence length="203" mass="23101">MSRYTGPSWKQARRLGLSLTGTGKELARRNYVPGQHGPNNRSKLSEYGLQLAEKQKLRFTYGVGEKQFRNLFVQASKIKEGILGFNFMLLLERRLDNVVYRLGLATTRRQARQFVNHGHILVDGKRVDIPSYRVTPGQVISVREKSLKVPAILEAVEATLGRPAFVSFDAEKLEGSLTRLPERDEINPEINEALIVEFYNKML</sequence>
<accession>A3CRA2</accession>
<proteinExistence type="inferred from homology"/>
<comment type="function">
    <text evidence="1">One of the primary rRNA binding proteins, it binds directly to 16S rRNA where it nucleates assembly of the body of the 30S subunit.</text>
</comment>
<comment type="function">
    <text evidence="1">With S5 and S12 plays an important role in translational accuracy.</text>
</comment>
<comment type="subunit">
    <text evidence="1">Part of the 30S ribosomal subunit. Contacts protein S5. The interaction surface between S4 and S5 is involved in control of translational fidelity.</text>
</comment>
<comment type="similarity">
    <text evidence="1">Belongs to the universal ribosomal protein uS4 family.</text>
</comment>
<comment type="sequence caution" evidence="2">
    <conflict type="erroneous initiation">
        <sequence resource="EMBL-CDS" id="ABN45707"/>
    </conflict>
</comment>
<protein>
    <recommendedName>
        <fullName evidence="1">Small ribosomal subunit protein uS4</fullName>
    </recommendedName>
    <alternativeName>
        <fullName evidence="2">30S ribosomal protein S4</fullName>
    </alternativeName>
</protein>
<feature type="chain" id="PRO_0000293460" description="Small ribosomal subunit protein uS4">
    <location>
        <begin position="1"/>
        <end position="203"/>
    </location>
</feature>
<feature type="domain" description="S4 RNA-binding" evidence="1">
    <location>
        <begin position="93"/>
        <end position="156"/>
    </location>
</feature>
<keyword id="KW-1185">Reference proteome</keyword>
<keyword id="KW-0687">Ribonucleoprotein</keyword>
<keyword id="KW-0689">Ribosomal protein</keyword>
<keyword id="KW-0694">RNA-binding</keyword>
<keyword id="KW-0699">rRNA-binding</keyword>
<organism>
    <name type="scientific">Streptococcus sanguinis (strain SK36)</name>
    <dbReference type="NCBI Taxonomy" id="388919"/>
    <lineage>
        <taxon>Bacteria</taxon>
        <taxon>Bacillati</taxon>
        <taxon>Bacillota</taxon>
        <taxon>Bacilli</taxon>
        <taxon>Lactobacillales</taxon>
        <taxon>Streptococcaceae</taxon>
        <taxon>Streptococcus</taxon>
    </lineage>
</organism>
<dbReference type="EMBL" id="CP000387">
    <property type="protein sequence ID" value="ABN45707.1"/>
    <property type="status" value="ALT_INIT"/>
    <property type="molecule type" value="Genomic_DNA"/>
</dbReference>
<dbReference type="RefSeq" id="WP_002899562.1">
    <property type="nucleotide sequence ID" value="NZ_CAXTYR010000005.1"/>
</dbReference>
<dbReference type="RefSeq" id="YP_001036257.1">
    <property type="nucleotide sequence ID" value="NC_009009.1"/>
</dbReference>
<dbReference type="SMR" id="A3CRA2"/>
<dbReference type="STRING" id="388919.SSA_2350"/>
<dbReference type="GeneID" id="48426670"/>
<dbReference type="KEGG" id="ssa:SSA_2350"/>
<dbReference type="PATRIC" id="fig|388919.9.peg.2231"/>
<dbReference type="eggNOG" id="COG0522">
    <property type="taxonomic scope" value="Bacteria"/>
</dbReference>
<dbReference type="HOGENOM" id="CLU_092403_0_1_9"/>
<dbReference type="OrthoDB" id="9803672at2"/>
<dbReference type="Proteomes" id="UP000002148">
    <property type="component" value="Chromosome"/>
</dbReference>
<dbReference type="GO" id="GO:0015935">
    <property type="term" value="C:small ribosomal subunit"/>
    <property type="evidence" value="ECO:0007669"/>
    <property type="project" value="InterPro"/>
</dbReference>
<dbReference type="GO" id="GO:0019843">
    <property type="term" value="F:rRNA binding"/>
    <property type="evidence" value="ECO:0007669"/>
    <property type="project" value="UniProtKB-UniRule"/>
</dbReference>
<dbReference type="GO" id="GO:0003735">
    <property type="term" value="F:structural constituent of ribosome"/>
    <property type="evidence" value="ECO:0007669"/>
    <property type="project" value="InterPro"/>
</dbReference>
<dbReference type="GO" id="GO:0042274">
    <property type="term" value="P:ribosomal small subunit biogenesis"/>
    <property type="evidence" value="ECO:0007669"/>
    <property type="project" value="TreeGrafter"/>
</dbReference>
<dbReference type="GO" id="GO:0006412">
    <property type="term" value="P:translation"/>
    <property type="evidence" value="ECO:0007669"/>
    <property type="project" value="UniProtKB-UniRule"/>
</dbReference>
<dbReference type="CDD" id="cd00165">
    <property type="entry name" value="S4"/>
    <property type="match status" value="1"/>
</dbReference>
<dbReference type="FunFam" id="1.10.1050.10:FF:000001">
    <property type="entry name" value="30S ribosomal protein S4"/>
    <property type="match status" value="1"/>
</dbReference>
<dbReference type="FunFam" id="3.10.290.10:FF:000001">
    <property type="entry name" value="30S ribosomal protein S4"/>
    <property type="match status" value="1"/>
</dbReference>
<dbReference type="Gene3D" id="1.10.1050.10">
    <property type="entry name" value="Ribosomal Protein S4 Delta 41, Chain A, domain 1"/>
    <property type="match status" value="1"/>
</dbReference>
<dbReference type="Gene3D" id="3.10.290.10">
    <property type="entry name" value="RNA-binding S4 domain"/>
    <property type="match status" value="1"/>
</dbReference>
<dbReference type="HAMAP" id="MF_01306_B">
    <property type="entry name" value="Ribosomal_uS4_B"/>
    <property type="match status" value="1"/>
</dbReference>
<dbReference type="InterPro" id="IPR022801">
    <property type="entry name" value="Ribosomal_uS4"/>
</dbReference>
<dbReference type="InterPro" id="IPR005709">
    <property type="entry name" value="Ribosomal_uS4_bac-type"/>
</dbReference>
<dbReference type="InterPro" id="IPR018079">
    <property type="entry name" value="Ribosomal_uS4_CS"/>
</dbReference>
<dbReference type="InterPro" id="IPR001912">
    <property type="entry name" value="Ribosomal_uS4_N"/>
</dbReference>
<dbReference type="InterPro" id="IPR002942">
    <property type="entry name" value="S4_RNA-bd"/>
</dbReference>
<dbReference type="InterPro" id="IPR036986">
    <property type="entry name" value="S4_RNA-bd_sf"/>
</dbReference>
<dbReference type="NCBIfam" id="NF003717">
    <property type="entry name" value="PRK05327.1"/>
    <property type="match status" value="1"/>
</dbReference>
<dbReference type="NCBIfam" id="TIGR01017">
    <property type="entry name" value="rpsD_bact"/>
    <property type="match status" value="1"/>
</dbReference>
<dbReference type="PANTHER" id="PTHR11831">
    <property type="entry name" value="30S 40S RIBOSOMAL PROTEIN"/>
    <property type="match status" value="1"/>
</dbReference>
<dbReference type="PANTHER" id="PTHR11831:SF4">
    <property type="entry name" value="SMALL RIBOSOMAL SUBUNIT PROTEIN US4M"/>
    <property type="match status" value="1"/>
</dbReference>
<dbReference type="Pfam" id="PF00163">
    <property type="entry name" value="Ribosomal_S4"/>
    <property type="match status" value="1"/>
</dbReference>
<dbReference type="Pfam" id="PF01479">
    <property type="entry name" value="S4"/>
    <property type="match status" value="1"/>
</dbReference>
<dbReference type="SMART" id="SM01390">
    <property type="entry name" value="Ribosomal_S4"/>
    <property type="match status" value="1"/>
</dbReference>
<dbReference type="SMART" id="SM00363">
    <property type="entry name" value="S4"/>
    <property type="match status" value="1"/>
</dbReference>
<dbReference type="SUPFAM" id="SSF55174">
    <property type="entry name" value="Alpha-L RNA-binding motif"/>
    <property type="match status" value="1"/>
</dbReference>
<dbReference type="PROSITE" id="PS00632">
    <property type="entry name" value="RIBOSOMAL_S4"/>
    <property type="match status" value="1"/>
</dbReference>
<dbReference type="PROSITE" id="PS50889">
    <property type="entry name" value="S4"/>
    <property type="match status" value="1"/>
</dbReference>
<reference key="1">
    <citation type="journal article" date="2007" name="J. Bacteriol.">
        <title>Genome of the opportunistic pathogen Streptococcus sanguinis.</title>
        <authorList>
            <person name="Xu P."/>
            <person name="Alves J.M."/>
            <person name="Kitten T."/>
            <person name="Brown A."/>
            <person name="Chen Z."/>
            <person name="Ozaki L.S."/>
            <person name="Manque P."/>
            <person name="Ge X."/>
            <person name="Serrano M.G."/>
            <person name="Puiu D."/>
            <person name="Hendricks S."/>
            <person name="Wang Y."/>
            <person name="Chaplin M.D."/>
            <person name="Akan D."/>
            <person name="Paik S."/>
            <person name="Peterson D.L."/>
            <person name="Macrina F.L."/>
            <person name="Buck G.A."/>
        </authorList>
    </citation>
    <scope>NUCLEOTIDE SEQUENCE [LARGE SCALE GENOMIC DNA]</scope>
    <source>
        <strain>SK36</strain>
    </source>
</reference>